<geneLocation type="mitochondrion"/>
<dbReference type="EMBL" id="D21196">
    <property type="protein sequence ID" value="BAA04736.1"/>
    <property type="molecule type" value="Genomic_DNA"/>
</dbReference>
<dbReference type="EMBL" id="AB000109">
    <property type="protein sequence ID" value="BAA78072.1"/>
    <property type="molecule type" value="Genomic_DNA"/>
</dbReference>
<dbReference type="PIR" id="T43769">
    <property type="entry name" value="T43769"/>
</dbReference>
<dbReference type="RefSeq" id="NP_050090.1">
    <property type="nucleotide sequence ID" value="NC_000895.1"/>
</dbReference>
<dbReference type="SMR" id="Q23887"/>
<dbReference type="STRING" id="44689.Q23887"/>
<dbReference type="GeneID" id="2193918"/>
<dbReference type="KEGG" id="ddi:DidioMp23"/>
<dbReference type="dictyBase" id="DDB_G0294072">
    <property type="gene designation" value="mrps7"/>
</dbReference>
<dbReference type="VEuPathDB" id="AmoebaDB:DidioMp23"/>
<dbReference type="InParanoid" id="Q23887"/>
<dbReference type="PhylomeDB" id="Q23887"/>
<dbReference type="PRO" id="PR:Q23887"/>
<dbReference type="Proteomes" id="UP000002195">
    <property type="component" value="Mitochondrion"/>
</dbReference>
<dbReference type="GO" id="GO:0005739">
    <property type="term" value="C:mitochondrion"/>
    <property type="evidence" value="ECO:0007669"/>
    <property type="project" value="UniProtKB-SubCell"/>
</dbReference>
<dbReference type="GO" id="GO:1990904">
    <property type="term" value="C:ribonucleoprotein complex"/>
    <property type="evidence" value="ECO:0007669"/>
    <property type="project" value="UniProtKB-KW"/>
</dbReference>
<dbReference type="GO" id="GO:0005840">
    <property type="term" value="C:ribosome"/>
    <property type="evidence" value="ECO:0000318"/>
    <property type="project" value="GO_Central"/>
</dbReference>
<dbReference type="GO" id="GO:0003729">
    <property type="term" value="F:mRNA binding"/>
    <property type="evidence" value="ECO:0000318"/>
    <property type="project" value="GO_Central"/>
</dbReference>
<dbReference type="GO" id="GO:0019843">
    <property type="term" value="F:rRNA binding"/>
    <property type="evidence" value="ECO:0000318"/>
    <property type="project" value="GO_Central"/>
</dbReference>
<dbReference type="GO" id="GO:0003735">
    <property type="term" value="F:structural constituent of ribosome"/>
    <property type="evidence" value="ECO:0000318"/>
    <property type="project" value="GO_Central"/>
</dbReference>
<dbReference type="GO" id="GO:0000028">
    <property type="term" value="P:ribosomal small subunit assembly"/>
    <property type="evidence" value="ECO:0000318"/>
    <property type="project" value="GO_Central"/>
</dbReference>
<dbReference type="GO" id="GO:0006412">
    <property type="term" value="P:translation"/>
    <property type="evidence" value="ECO:0000318"/>
    <property type="project" value="GO_Central"/>
</dbReference>
<dbReference type="CDD" id="cd00323">
    <property type="entry name" value="uS7"/>
    <property type="match status" value="1"/>
</dbReference>
<dbReference type="Gene3D" id="1.10.455.10">
    <property type="entry name" value="Ribosomal protein S7 domain"/>
    <property type="match status" value="1"/>
</dbReference>
<dbReference type="InterPro" id="IPR000235">
    <property type="entry name" value="Ribosomal_uS7"/>
</dbReference>
<dbReference type="InterPro" id="IPR023798">
    <property type="entry name" value="Ribosomal_uS7_dom"/>
</dbReference>
<dbReference type="InterPro" id="IPR036823">
    <property type="entry name" value="Ribosomal_uS7_dom_sf"/>
</dbReference>
<dbReference type="Pfam" id="PF00177">
    <property type="entry name" value="Ribosomal_S7"/>
    <property type="match status" value="1"/>
</dbReference>
<dbReference type="PIRSF" id="PIRSF002122">
    <property type="entry name" value="RPS7p_RPS7a_RPS5e_RPS7o"/>
    <property type="match status" value="1"/>
</dbReference>
<dbReference type="SUPFAM" id="SSF47973">
    <property type="entry name" value="Ribosomal protein S7"/>
    <property type="match status" value="1"/>
</dbReference>
<evidence type="ECO:0000250" key="1"/>
<evidence type="ECO:0000305" key="2"/>
<keyword id="KW-0496">Mitochondrion</keyword>
<keyword id="KW-1185">Reference proteome</keyword>
<keyword id="KW-0687">Ribonucleoprotein</keyword>
<keyword id="KW-0689">Ribosomal protein</keyword>
<keyword id="KW-0694">RNA-binding</keyword>
<keyword id="KW-0699">rRNA-binding</keyword>
<organism>
    <name type="scientific">Dictyostelium discoideum</name>
    <name type="common">Social amoeba</name>
    <dbReference type="NCBI Taxonomy" id="44689"/>
    <lineage>
        <taxon>Eukaryota</taxon>
        <taxon>Amoebozoa</taxon>
        <taxon>Evosea</taxon>
        <taxon>Eumycetozoa</taxon>
        <taxon>Dictyostelia</taxon>
        <taxon>Dictyosteliales</taxon>
        <taxon>Dictyosteliaceae</taxon>
        <taxon>Dictyostelium</taxon>
    </lineage>
</organism>
<accession>Q23887</accession>
<accession>Q9XPJ3</accession>
<name>RT07_DICDI</name>
<comment type="function">
    <text evidence="1">One of the primary rRNA binding proteins, it binds directly to 16S-like rRNA where it nucleates assembly of the head domain of the small subunit.</text>
</comment>
<comment type="subunit">
    <text>Part of the small ribosomal subunit.</text>
</comment>
<comment type="subcellular location">
    <subcellularLocation>
        <location>Mitochondrion</location>
    </subcellularLocation>
</comment>
<comment type="similarity">
    <text evidence="2">Belongs to the universal ribosomal protein uS7 family.</text>
</comment>
<protein>
    <recommendedName>
        <fullName evidence="2">Small ribosomal subunit protein uS7m</fullName>
    </recommendedName>
    <alternativeName>
        <fullName>Ribosomal protein S7, mitochondrial</fullName>
        <shortName>MRP-S7</shortName>
        <shortName>S7mt</shortName>
    </alternativeName>
</protein>
<gene>
    <name type="primary">mrps7</name>
    <name type="synonym">rps7</name>
    <name type="ORF">DDB_G0294072</name>
</gene>
<proteinExistence type="inferred from homology"/>
<sequence length="162" mass="19230">MIIKVQKTFEKRLINAFMRKGNYIKAEKIYLKVVNRLSTIGIKNSYQFIRETLLKMTPIMGVVKKKRGVKELIYPKYLEPEMGEKLAIKWLKKTVAKFKGELLIENIVEEFVKASKDQGEVVKEKWALYKEVRYAISCNTRKGHHKSFVEQKLKATQRRKWY</sequence>
<reference key="1">
    <citation type="journal article" date="1998" name="Curr. Genet.">
        <title>A ribosomal protein gene cluster is encoded in the mitochondrial DNA of Dictyostelium discoideum: UGA termination codons and similarity of gene order to Acanthamoeba castellanii.</title>
        <authorList>
            <person name="Iwamoto M."/>
            <person name="Pi M."/>
            <person name="Kurihara M."/>
            <person name="Morio T."/>
            <person name="Tanaka Y."/>
        </authorList>
    </citation>
    <scope>NUCLEOTIDE SEQUENCE [GENOMIC DNA]</scope>
    <source>
        <strain>AX3</strain>
    </source>
</reference>
<reference key="2">
    <citation type="journal article" date="2000" name="Mol. Gen. Genet.">
        <title>The mitochondrial DNA of Dictyostelium discoideum: complete sequence, gene content and genome organization.</title>
        <authorList>
            <person name="Ogawa S."/>
            <person name="Yoshino R."/>
            <person name="Angata K."/>
            <person name="Iwamoto M."/>
            <person name="Pi M."/>
            <person name="Kuroe K."/>
            <person name="Matsuo K."/>
            <person name="Morio T."/>
            <person name="Urushihara H."/>
            <person name="Yanagisawa K."/>
            <person name="Tanaka Y."/>
        </authorList>
    </citation>
    <scope>NUCLEOTIDE SEQUENCE [LARGE SCALE GENOMIC DNA]</scope>
    <source>
        <strain>AX3</strain>
    </source>
</reference>
<feature type="chain" id="PRO_0000312375" description="Small ribosomal subunit protein uS7m">
    <location>
        <begin position="1"/>
        <end position="162"/>
    </location>
</feature>